<gene>
    <name evidence="7 10" type="primary">sul3</name>
</gene>
<geneLocation type="plasmid" evidence="10">
    <name>pVP440</name>
</geneLocation>
<comment type="function">
    <text evidence="4 5 6">Catalyzes the condensation of para-aminobenzoate (pABA) with 6-hydroxymethyl-7,8-dihydropterin diphosphate (DHPt-PP) to form 7,8-dihydropteroate (H2Pte), the immediate precursor of folate derivatives (By similarity) (PubMed:37419898). Confers resistance to sulfonamide antibiotics, including sulfamethoxazole (SMX), sulfadiazine and sulfisoxazole (PubMed:12604565, PubMed:37419898).</text>
</comment>
<comment type="catalytic activity">
    <reaction evidence="6">
        <text>(7,8-dihydropterin-6-yl)methyl diphosphate + 4-aminobenzoate = 7,8-dihydropteroate + diphosphate</text>
        <dbReference type="Rhea" id="RHEA:19949"/>
        <dbReference type="ChEBI" id="CHEBI:17836"/>
        <dbReference type="ChEBI" id="CHEBI:17839"/>
        <dbReference type="ChEBI" id="CHEBI:33019"/>
        <dbReference type="ChEBI" id="CHEBI:72950"/>
        <dbReference type="EC" id="2.5.1.15"/>
    </reaction>
</comment>
<comment type="cofactor">
    <cofactor evidence="4">
        <name>Mg(2+)</name>
        <dbReference type="ChEBI" id="CHEBI:18420"/>
    </cofactor>
</comment>
<comment type="biophysicochemical properties">
    <kinetics>
        <KM evidence="6">9.66 uM for 4-aminobenzoate (at pH 7.5 and 37 degrees Celsius)</KM>
        <KM evidence="6">636 uM for sulfamethoxazole (at pH 7.5 and 37 degrees Celsius)</KM>
        <text evidence="6">kcat is 0.42 sec(-1) for 4-aminobenzoate as substrate (at pH 7.5 and 37 degrees Celsius) (PubMed:37419898). kcat is 0.25 sec(-1) for sulfamethoxazole as substrate (at pH 7.5 and 37 degrees Celsius) (PubMed:37419898).</text>
    </kinetics>
</comment>
<comment type="pathway">
    <text evidence="4 8">Cofactor biosynthesis; tetrahydrofolate biosynthesis; 7,8-dihydrofolate from 2-amino-4-hydroxy-6-hydroxymethyl-7,8-dihydropteridine diphosphate and 4-aminobenzoate: step 1/2.</text>
</comment>
<comment type="miscellaneous">
    <text evidence="9">The sul3 gene is located on various large self-transmissible resistance plasmids and on transposons.</text>
</comment>
<comment type="similarity">
    <text evidence="4 9">Belongs to the DHPS family.</text>
</comment>
<protein>
    <recommendedName>
        <fullName evidence="4 8">Dihydropteroate synthase type-3</fullName>
        <shortName evidence="4 8">DHPS</shortName>
        <ecNumber evidence="4 6">2.5.1.15</ecNumber>
    </recommendedName>
    <alternativeName>
        <fullName evidence="2">Dihydropteroate pyrophosphorylase type III</fullName>
    </alternativeName>
    <alternativeName>
        <fullName evidence="2">Dihydropteroate synthase type III</fullName>
    </alternativeName>
</protein>
<organism evidence="10">
    <name type="scientific">Escherichia coli</name>
    <dbReference type="NCBI Taxonomy" id="562"/>
    <lineage>
        <taxon>Bacteria</taxon>
        <taxon>Pseudomonadati</taxon>
        <taxon>Pseudomonadota</taxon>
        <taxon>Gammaproteobacteria</taxon>
        <taxon>Enterobacterales</taxon>
        <taxon>Enterobacteriaceae</taxon>
        <taxon>Escherichia</taxon>
    </lineage>
</organism>
<proteinExistence type="evidence at protein level"/>
<name>DHP3_ECOLX</name>
<keyword id="KW-0002">3D-structure</keyword>
<keyword id="KW-0046">Antibiotic resistance</keyword>
<keyword id="KW-0289">Folate biosynthesis</keyword>
<keyword id="KW-0460">Magnesium</keyword>
<keyword id="KW-0479">Metal-binding</keyword>
<keyword id="KW-0614">Plasmid</keyword>
<keyword id="KW-0808">Transferase</keyword>
<sequence length="263" mass="28898">MSKIFGIVNITTDSFSDGGLYLDTDKAIEHALHLVEDGADVIDLGAASSNPDTTEVGVVEEIKRLKPVIKALKEKGISISVDTFKPEVQSFCIEQKVDFINDIQGFPYPEIYSGLAKSDCKLVLMHSVQRIGAATKVETNPEEVFTSMMEFFKERIAALVEAGVKRERIILDPGMGFFLGSNPETSILVLKRFPEIQEAFNLQVMIAVSRKSFLGKITGTDVKSRLAPTLAAEMYAYKKGADYLRTHDVKSLSDALKISKALG</sequence>
<dbReference type="EC" id="2.5.1.15" evidence="4 6"/>
<dbReference type="EMBL" id="AJ459418">
    <property type="protein sequence ID" value="CAD30683.1"/>
    <property type="molecule type" value="Genomic_DNA"/>
</dbReference>
<dbReference type="PDB" id="7S2L">
    <property type="method" value="X-ray"/>
    <property type="resolution" value="2.79 A"/>
    <property type="chains" value="A/B/C/D=1-263"/>
</dbReference>
<dbReference type="PDB" id="7S2M">
    <property type="method" value="X-ray"/>
    <property type="resolution" value="2.42 A"/>
    <property type="chains" value="A/B/C=1-263"/>
</dbReference>
<dbReference type="PDB" id="8SCD">
    <property type="method" value="X-ray"/>
    <property type="resolution" value="2.06 A"/>
    <property type="chains" value="A=1-263"/>
</dbReference>
<dbReference type="PDBsum" id="7S2L"/>
<dbReference type="PDBsum" id="7S2M"/>
<dbReference type="PDBsum" id="8SCD"/>
<dbReference type="UniPathway" id="UPA00077">
    <property type="reaction ID" value="UER00156"/>
</dbReference>
<dbReference type="PROSITE" id="PS00792">
    <property type="entry name" value="DHPS_1"/>
    <property type="match status" value="1"/>
</dbReference>
<dbReference type="PROSITE" id="PS00793">
    <property type="entry name" value="DHPS_2"/>
    <property type="match status" value="1"/>
</dbReference>
<dbReference type="PROSITE" id="PS50972">
    <property type="entry name" value="PTERIN_BINDING"/>
    <property type="match status" value="1"/>
</dbReference>
<reference evidence="10" key="1">
    <citation type="journal article" date="2003" name="Antimicrob. Agents Chemother.">
        <title>A new sulfonamide resistance gene (sul3) in Escherichia coli is widespread in the pig population of Switzerland.</title>
        <authorList>
            <person name="Perreten V."/>
            <person name="Boerlin P."/>
        </authorList>
    </citation>
    <scope>NUCLEOTIDE SEQUENCE [GENOMIC DNA]</scope>
    <scope>FUNCTION</scope>
    <source>
        <strain evidence="10">Rl0044</strain>
        <plasmid evidence="10">pVP440</plasmid>
    </source>
</reference>
<reference evidence="11 12 13" key="2">
    <citation type="journal article" date="2023" name="Nat. Commun.">
        <title>Molecular mechanism of plasmid-borne resistance to sulfonamide antibiotics.</title>
        <authorList>
            <person name="Venkatesan M."/>
            <person name="Fruci M."/>
            <person name="Verellen L.A."/>
            <person name="Skarina T."/>
            <person name="Mesa N."/>
            <person name="Flick R."/>
            <person name="Pham C."/>
            <person name="Mahadevan R."/>
            <person name="Stogios P.J."/>
            <person name="Savchenko A."/>
        </authorList>
    </citation>
    <scope>X-RAY CRYSTALLOGRAPHY (2.06 ANGSTROMS) IN APO FORM AND IN COMPLEXES WITH MG(2+) AND WITH SUBSTRATES</scope>
    <scope>FUNCTION</scope>
    <scope>CATALYTIC ACTIVITY</scope>
    <scope>BIOPHYSICOCHEMICAL PROPERTIES</scope>
    <scope>MUTAGENESIS OF PHE-177 AND LEU-179</scope>
</reference>
<feature type="chain" id="PRO_0000462324" description="Dihydropteroate synthase type-3">
    <location>
        <begin position="1"/>
        <end position="263"/>
    </location>
</feature>
<feature type="domain" description="Pterin-binding" evidence="3">
    <location>
        <begin position="2"/>
        <end position="257"/>
    </location>
</feature>
<feature type="binding site" evidence="6 13">
    <location>
        <position position="9"/>
    </location>
    <ligand>
        <name>Mg(2+)</name>
        <dbReference type="ChEBI" id="CHEBI:18420"/>
    </ligand>
</feature>
<feature type="binding site" evidence="6 13">
    <location>
        <position position="49"/>
    </location>
    <ligand>
        <name>4-aminobenzoate</name>
        <dbReference type="ChEBI" id="CHEBI:17836"/>
    </ligand>
</feature>
<feature type="binding site" evidence="1">
    <location>
        <position position="82"/>
    </location>
    <ligand>
        <name>(7,8-dihydropterin-6-yl)methyl diphosphate</name>
        <dbReference type="ChEBI" id="CHEBI:72950"/>
    </ligand>
</feature>
<feature type="binding site" evidence="1">
    <location>
        <position position="101"/>
    </location>
    <ligand>
        <name>(7,8-dihydropterin-6-yl)methyl diphosphate</name>
        <dbReference type="ChEBI" id="CHEBI:72950"/>
    </ligand>
</feature>
<feature type="binding site" evidence="6 12">
    <location>
        <position position="101"/>
    </location>
    <ligand>
        <name>6-hydroxymethyl-7,8-dihydropterin</name>
        <dbReference type="ChEBI" id="CHEBI:44841"/>
    </ligand>
</feature>
<feature type="binding site" evidence="1">
    <location>
        <position position="172"/>
    </location>
    <ligand>
        <name>(7,8-dihydropterin-6-yl)methyl diphosphate</name>
        <dbReference type="ChEBI" id="CHEBI:72950"/>
    </ligand>
</feature>
<feature type="binding site" evidence="6 12">
    <location>
        <position position="172"/>
    </location>
    <ligand>
        <name>6-hydroxymethyl-7,8-dihydropterin</name>
        <dbReference type="ChEBI" id="CHEBI:44841"/>
    </ligand>
</feature>
<feature type="binding site" evidence="6 13">
    <location>
        <position position="177"/>
    </location>
    <ligand>
        <name>4-aminobenzoate</name>
        <dbReference type="ChEBI" id="CHEBI:17836"/>
    </ligand>
</feature>
<feature type="binding site" evidence="1">
    <location>
        <position position="211"/>
    </location>
    <ligand>
        <name>(7,8-dihydropterin-6-yl)methyl diphosphate</name>
        <dbReference type="ChEBI" id="CHEBI:72950"/>
    </ligand>
</feature>
<feature type="binding site" evidence="6 12">
    <location>
        <position position="211"/>
    </location>
    <ligand>
        <name>6-hydroxymethyl-7,8-dihydropterin</name>
        <dbReference type="ChEBI" id="CHEBI:44841"/>
    </ligand>
</feature>
<feature type="binding site" evidence="6 13">
    <location>
        <position position="212"/>
    </location>
    <ligand>
        <name>4-aminobenzoate</name>
        <dbReference type="ChEBI" id="CHEBI:17836"/>
    </ligand>
</feature>
<feature type="binding site" evidence="1">
    <location>
        <begin position="245"/>
        <end position="247"/>
    </location>
    <ligand>
        <name>(7,8-dihydropterin-6-yl)methyl diphosphate</name>
        <dbReference type="ChEBI" id="CHEBI:72950"/>
    </ligand>
</feature>
<feature type="mutagenesis site" description="Similar catalytic efficiency for para-aminobenzoate (pABA) as substrate as wild-type. Significantly increases competitive inhibition by sulfamethoxazole (SMX) versus pABA. Increases preference for SMX as a substrate for the dihydropteroate synthase reaction. Drastically reduces ability to complement folP deletion mutation in E.coli strain BW25113." evidence="6">
    <original>F</original>
    <variation>G</variation>
    <location>
        <position position="177"/>
    </location>
</feature>
<feature type="mutagenesis site" description="Almost abolishes ability to complement folP deletion mutation in E.coli strain BW25113." evidence="6">
    <location>
        <position position="177"/>
    </location>
</feature>
<feature type="mutagenesis site" description="Drastically reduces ability to complement folP deletion mutation in E.coli strain BW25113. Does not adversely impact growth or enzyme expression levels." evidence="6">
    <original>L</original>
    <variation>E</variation>
    <location>
        <position position="179"/>
    </location>
</feature>
<feature type="mutagenesis site" description="Fully complements folP deletion mutation in E.coli strain BW25113. Does not adversely impact growth or enzyme expression levels." evidence="6">
    <original>L</original>
    <variation>K</variation>
    <location>
        <position position="179"/>
    </location>
</feature>
<accession>C0HMD9</accession>
<evidence type="ECO:0000250" key="1">
    <source>
        <dbReference type="UniProtKB" id="P0AC13"/>
    </source>
</evidence>
<evidence type="ECO:0000250" key="2">
    <source>
        <dbReference type="UniProtKB" id="P0C002"/>
    </source>
</evidence>
<evidence type="ECO:0000255" key="3">
    <source>
        <dbReference type="PROSITE-ProRule" id="PRU00334"/>
    </source>
</evidence>
<evidence type="ECO:0000255" key="4">
    <source>
        <dbReference type="RuleBase" id="RU361205"/>
    </source>
</evidence>
<evidence type="ECO:0000269" key="5">
    <source>
    </source>
</evidence>
<evidence type="ECO:0000269" key="6">
    <source>
    </source>
</evidence>
<evidence type="ECO:0000303" key="7">
    <source>
    </source>
</evidence>
<evidence type="ECO:0000303" key="8">
    <source>
    </source>
</evidence>
<evidence type="ECO:0000305" key="9"/>
<evidence type="ECO:0000312" key="10">
    <source>
        <dbReference type="EMBL" id="CAD30683.1"/>
    </source>
</evidence>
<evidence type="ECO:0007744" key="11">
    <source>
        <dbReference type="PDB" id="7S2L"/>
    </source>
</evidence>
<evidence type="ECO:0007744" key="12">
    <source>
        <dbReference type="PDB" id="7S2M"/>
    </source>
</evidence>
<evidence type="ECO:0007744" key="13">
    <source>
        <dbReference type="PDB" id="8SCD"/>
    </source>
</evidence>